<evidence type="ECO:0000255" key="1">
    <source>
        <dbReference type="HAMAP-Rule" id="MF_00012"/>
    </source>
</evidence>
<organism>
    <name type="scientific">Crocosphaera subtropica (strain ATCC 51142 / BH68)</name>
    <name type="common">Cyanothece sp. (strain ATCC 51142)</name>
    <dbReference type="NCBI Taxonomy" id="43989"/>
    <lineage>
        <taxon>Bacteria</taxon>
        <taxon>Bacillati</taxon>
        <taxon>Cyanobacteriota</taxon>
        <taxon>Cyanophyceae</taxon>
        <taxon>Oscillatoriophycideae</taxon>
        <taxon>Chroococcales</taxon>
        <taxon>Aphanothecaceae</taxon>
        <taxon>Crocosphaera</taxon>
        <taxon>Crocosphaera subtropica</taxon>
    </lineage>
</organism>
<feature type="chain" id="PRO_1000089378" description="Dihydroxy-acid dehydratase">
    <location>
        <begin position="1"/>
        <end position="561"/>
    </location>
</feature>
<feature type="active site" description="Proton acceptor" evidence="1">
    <location>
        <position position="473"/>
    </location>
</feature>
<feature type="binding site" evidence="1">
    <location>
        <position position="50"/>
    </location>
    <ligand>
        <name>[2Fe-2S] cluster</name>
        <dbReference type="ChEBI" id="CHEBI:190135"/>
    </ligand>
</feature>
<feature type="binding site" evidence="1">
    <location>
        <position position="82"/>
    </location>
    <ligand>
        <name>Mg(2+)</name>
        <dbReference type="ChEBI" id="CHEBI:18420"/>
    </ligand>
</feature>
<feature type="binding site" evidence="1">
    <location>
        <position position="123"/>
    </location>
    <ligand>
        <name>[2Fe-2S] cluster</name>
        <dbReference type="ChEBI" id="CHEBI:190135"/>
    </ligand>
</feature>
<feature type="binding site" evidence="1">
    <location>
        <position position="124"/>
    </location>
    <ligand>
        <name>Mg(2+)</name>
        <dbReference type="ChEBI" id="CHEBI:18420"/>
    </ligand>
</feature>
<feature type="binding site" description="via carbamate group" evidence="1">
    <location>
        <position position="125"/>
    </location>
    <ligand>
        <name>Mg(2+)</name>
        <dbReference type="ChEBI" id="CHEBI:18420"/>
    </ligand>
</feature>
<feature type="binding site" evidence="1">
    <location>
        <position position="195"/>
    </location>
    <ligand>
        <name>[2Fe-2S] cluster</name>
        <dbReference type="ChEBI" id="CHEBI:190135"/>
    </ligand>
</feature>
<feature type="binding site" evidence="1">
    <location>
        <position position="447"/>
    </location>
    <ligand>
        <name>Mg(2+)</name>
        <dbReference type="ChEBI" id="CHEBI:18420"/>
    </ligand>
</feature>
<feature type="modified residue" description="N6-carboxylysine" evidence="1">
    <location>
        <position position="125"/>
    </location>
</feature>
<protein>
    <recommendedName>
        <fullName evidence="1">Dihydroxy-acid dehydratase</fullName>
        <shortName evidence="1">DAD</shortName>
        <ecNumber evidence="1">4.2.1.9</ecNumber>
    </recommendedName>
</protein>
<proteinExistence type="inferred from homology"/>
<dbReference type="EC" id="4.2.1.9" evidence="1"/>
<dbReference type="EMBL" id="CP000806">
    <property type="protein sequence ID" value="ACB53748.1"/>
    <property type="molecule type" value="Genomic_DNA"/>
</dbReference>
<dbReference type="RefSeq" id="WP_009543544.1">
    <property type="nucleotide sequence ID" value="NC_010546.1"/>
</dbReference>
<dbReference type="SMR" id="B1WTN3"/>
<dbReference type="STRING" id="43989.cce_4400"/>
<dbReference type="KEGG" id="cyt:cce_4400"/>
<dbReference type="eggNOG" id="COG0129">
    <property type="taxonomic scope" value="Bacteria"/>
</dbReference>
<dbReference type="HOGENOM" id="CLU_014271_4_2_3"/>
<dbReference type="OrthoDB" id="9807077at2"/>
<dbReference type="UniPathway" id="UPA00047">
    <property type="reaction ID" value="UER00057"/>
</dbReference>
<dbReference type="UniPathway" id="UPA00049">
    <property type="reaction ID" value="UER00061"/>
</dbReference>
<dbReference type="Proteomes" id="UP000001203">
    <property type="component" value="Chromosome circular"/>
</dbReference>
<dbReference type="GO" id="GO:0051537">
    <property type="term" value="F:2 iron, 2 sulfur cluster binding"/>
    <property type="evidence" value="ECO:0007669"/>
    <property type="project" value="UniProtKB-UniRule"/>
</dbReference>
<dbReference type="GO" id="GO:0004160">
    <property type="term" value="F:dihydroxy-acid dehydratase activity"/>
    <property type="evidence" value="ECO:0007669"/>
    <property type="project" value="UniProtKB-UniRule"/>
</dbReference>
<dbReference type="GO" id="GO:0000287">
    <property type="term" value="F:magnesium ion binding"/>
    <property type="evidence" value="ECO:0007669"/>
    <property type="project" value="UniProtKB-UniRule"/>
</dbReference>
<dbReference type="GO" id="GO:0009097">
    <property type="term" value="P:isoleucine biosynthetic process"/>
    <property type="evidence" value="ECO:0007669"/>
    <property type="project" value="UniProtKB-UniRule"/>
</dbReference>
<dbReference type="GO" id="GO:0009099">
    <property type="term" value="P:L-valine biosynthetic process"/>
    <property type="evidence" value="ECO:0007669"/>
    <property type="project" value="UniProtKB-UniRule"/>
</dbReference>
<dbReference type="FunFam" id="3.50.30.80:FF:000001">
    <property type="entry name" value="Dihydroxy-acid dehydratase"/>
    <property type="match status" value="1"/>
</dbReference>
<dbReference type="Gene3D" id="3.50.30.80">
    <property type="entry name" value="IlvD/EDD C-terminal domain-like"/>
    <property type="match status" value="1"/>
</dbReference>
<dbReference type="HAMAP" id="MF_00012">
    <property type="entry name" value="IlvD"/>
    <property type="match status" value="1"/>
</dbReference>
<dbReference type="InterPro" id="IPR050165">
    <property type="entry name" value="DHAD_IlvD/Edd"/>
</dbReference>
<dbReference type="InterPro" id="IPR042096">
    <property type="entry name" value="Dihydro-acid_dehy_C"/>
</dbReference>
<dbReference type="InterPro" id="IPR004404">
    <property type="entry name" value="DihydroxyA_deHydtase"/>
</dbReference>
<dbReference type="InterPro" id="IPR020558">
    <property type="entry name" value="DiOHA_6PGluconate_deHydtase_CS"/>
</dbReference>
<dbReference type="InterPro" id="IPR056740">
    <property type="entry name" value="ILV_EDD_C"/>
</dbReference>
<dbReference type="InterPro" id="IPR000581">
    <property type="entry name" value="ILV_EDD_N"/>
</dbReference>
<dbReference type="InterPro" id="IPR037237">
    <property type="entry name" value="IlvD/EDD_N"/>
</dbReference>
<dbReference type="NCBIfam" id="TIGR00110">
    <property type="entry name" value="ilvD"/>
    <property type="match status" value="1"/>
</dbReference>
<dbReference type="NCBIfam" id="NF002068">
    <property type="entry name" value="PRK00911.1"/>
    <property type="match status" value="1"/>
</dbReference>
<dbReference type="PANTHER" id="PTHR21000">
    <property type="entry name" value="DIHYDROXY-ACID DEHYDRATASE DAD"/>
    <property type="match status" value="1"/>
</dbReference>
<dbReference type="PANTHER" id="PTHR21000:SF5">
    <property type="entry name" value="DIHYDROXY-ACID DEHYDRATASE, MITOCHONDRIAL"/>
    <property type="match status" value="1"/>
</dbReference>
<dbReference type="Pfam" id="PF24877">
    <property type="entry name" value="ILV_EDD_C"/>
    <property type="match status" value="1"/>
</dbReference>
<dbReference type="Pfam" id="PF00920">
    <property type="entry name" value="ILVD_EDD_N"/>
    <property type="match status" value="1"/>
</dbReference>
<dbReference type="SUPFAM" id="SSF143975">
    <property type="entry name" value="IlvD/EDD N-terminal domain-like"/>
    <property type="match status" value="1"/>
</dbReference>
<dbReference type="SUPFAM" id="SSF52016">
    <property type="entry name" value="LeuD/IlvD-like"/>
    <property type="match status" value="1"/>
</dbReference>
<dbReference type="PROSITE" id="PS00886">
    <property type="entry name" value="ILVD_EDD_1"/>
    <property type="match status" value="1"/>
</dbReference>
<dbReference type="PROSITE" id="PS00887">
    <property type="entry name" value="ILVD_EDD_2"/>
    <property type="match status" value="1"/>
</dbReference>
<sequence length="561" mass="58958">MSENLRSRAVTQGSQRTPNRAMLRAVGFGDDDFNKPIVGVANGFSTITPCNMGINDLAKRAEAGIKSAGGMPQMFGTITISDGISMGTEGMKYSLVSRDVIADSIETACNGQSMDGVIAIGGCDKNMPGAMIAMARMNIPAIFVYGGTIKPGHYNGEDLTVVSAFEAVGQHSAGKIDDNTLLAIERNACPGAGSCGGMFTANTMSSAFEVMGMSLPYSSTMAAEDAEKADSTEKSAFVLVNAIRNQILPRQILTRKAFENAVSVIMAVGGSTNAVLHLLAIANTIGVDLTLDDFETIRQRVPVLCDLKPSGRYVTVNLHQAGGIPQVMKMLLNHGLLHGDALTISGQTIAEILADVPDEPPANQDVIRSWDNPVYKEGHLAILKGNLASEGAVAKISGVKNPQITGPARVFESEEECLEAILAGKINAGDVIIVRYEGPRGGPGMREMLAPTSAIIGAGLGDSVGLITDGRFSGGTYGLVVGHVAPEAYVGGTIGLVEEGDSITIDAKKKLLQVNVSEEELSQRRANWKAPEPRYQRGVLGKYAKLVSSSSLGAVTDLNLF</sequence>
<reference key="1">
    <citation type="journal article" date="2008" name="Proc. Natl. Acad. Sci. U.S.A.">
        <title>The genome of Cyanothece 51142, a unicellular diazotrophic cyanobacterium important in the marine nitrogen cycle.</title>
        <authorList>
            <person name="Welsh E.A."/>
            <person name="Liberton M."/>
            <person name="Stoeckel J."/>
            <person name="Loh T."/>
            <person name="Elvitigala T."/>
            <person name="Wang C."/>
            <person name="Wollam A."/>
            <person name="Fulton R.S."/>
            <person name="Clifton S.W."/>
            <person name="Jacobs J.M."/>
            <person name="Aurora R."/>
            <person name="Ghosh B.K."/>
            <person name="Sherman L.A."/>
            <person name="Smith R.D."/>
            <person name="Wilson R.K."/>
            <person name="Pakrasi H.B."/>
        </authorList>
    </citation>
    <scope>NUCLEOTIDE SEQUENCE [LARGE SCALE GENOMIC DNA]</scope>
    <source>
        <strain>ATCC 51142 / BH68</strain>
    </source>
</reference>
<name>ILVD_CROS5</name>
<keyword id="KW-0001">2Fe-2S</keyword>
<keyword id="KW-0028">Amino-acid biosynthesis</keyword>
<keyword id="KW-0100">Branched-chain amino acid biosynthesis</keyword>
<keyword id="KW-0408">Iron</keyword>
<keyword id="KW-0411">Iron-sulfur</keyword>
<keyword id="KW-0456">Lyase</keyword>
<keyword id="KW-0460">Magnesium</keyword>
<keyword id="KW-0479">Metal-binding</keyword>
<keyword id="KW-1185">Reference proteome</keyword>
<accession>B1WTN3</accession>
<comment type="function">
    <text evidence="1">Functions in the biosynthesis of branched-chain amino acids. Catalyzes the dehydration of (2R,3R)-2,3-dihydroxy-3-methylpentanoate (2,3-dihydroxy-3-methylvalerate) into 2-oxo-3-methylpentanoate (2-oxo-3-methylvalerate) and of (2R)-2,3-dihydroxy-3-methylbutanoate (2,3-dihydroxyisovalerate) into 2-oxo-3-methylbutanoate (2-oxoisovalerate), the penultimate precursor to L-isoleucine and L-valine, respectively.</text>
</comment>
<comment type="catalytic activity">
    <reaction evidence="1">
        <text>(2R)-2,3-dihydroxy-3-methylbutanoate = 3-methyl-2-oxobutanoate + H2O</text>
        <dbReference type="Rhea" id="RHEA:24809"/>
        <dbReference type="ChEBI" id="CHEBI:11851"/>
        <dbReference type="ChEBI" id="CHEBI:15377"/>
        <dbReference type="ChEBI" id="CHEBI:49072"/>
        <dbReference type="EC" id="4.2.1.9"/>
    </reaction>
    <physiologicalReaction direction="left-to-right" evidence="1">
        <dbReference type="Rhea" id="RHEA:24810"/>
    </physiologicalReaction>
</comment>
<comment type="catalytic activity">
    <reaction evidence="1">
        <text>(2R,3R)-2,3-dihydroxy-3-methylpentanoate = (S)-3-methyl-2-oxopentanoate + H2O</text>
        <dbReference type="Rhea" id="RHEA:27694"/>
        <dbReference type="ChEBI" id="CHEBI:15377"/>
        <dbReference type="ChEBI" id="CHEBI:35146"/>
        <dbReference type="ChEBI" id="CHEBI:49258"/>
        <dbReference type="EC" id="4.2.1.9"/>
    </reaction>
    <physiologicalReaction direction="left-to-right" evidence="1">
        <dbReference type="Rhea" id="RHEA:27695"/>
    </physiologicalReaction>
</comment>
<comment type="cofactor">
    <cofactor evidence="1">
        <name>[2Fe-2S] cluster</name>
        <dbReference type="ChEBI" id="CHEBI:190135"/>
    </cofactor>
    <text evidence="1">Binds 1 [2Fe-2S] cluster per subunit. This cluster acts as a Lewis acid cofactor.</text>
</comment>
<comment type="cofactor">
    <cofactor evidence="1">
        <name>Mg(2+)</name>
        <dbReference type="ChEBI" id="CHEBI:18420"/>
    </cofactor>
</comment>
<comment type="pathway">
    <text evidence="1">Amino-acid biosynthesis; L-isoleucine biosynthesis; L-isoleucine from 2-oxobutanoate: step 3/4.</text>
</comment>
<comment type="pathway">
    <text evidence="1">Amino-acid biosynthesis; L-valine biosynthesis; L-valine from pyruvate: step 3/4.</text>
</comment>
<comment type="subunit">
    <text evidence="1">Homodimer.</text>
</comment>
<comment type="similarity">
    <text evidence="1">Belongs to the IlvD/Edd family.</text>
</comment>
<gene>
    <name evidence="1" type="primary">ilvD</name>
    <name type="ordered locus">cce_4400</name>
</gene>